<sequence>MNKKSLPLMALRDMVVFPGVIAPIFVGRQKSLQALSHTTVSEEDNSKYILVTLQKKFDQENPSKHELNNTAILAKIIQIVKLPNNTAKILIEAVARVKLSNIKGNDAFEANYEIIPDEEIFDVNNMRSLVDNAVQLFSKYAINDKKVNAEIIETINKEISNSTNFINIINILASHLITSLEAKQHLLEETSPFKRITTVISTLTSNIVNSETEQALQQRVRKQIEKTQRDYYLHEQMKAIQKELDEDKSELADIEKKIKSLKLSKEAKEKAESELKKLRSMNQMSAESGVTRNYLETLLSLPWGKYDNSKIDINQAEKILNRDHFGLEKVKERIIEYLAVLQRSSKIRGPILCLIGPPGVGKTSLVKSIAEGMGRKYTKFALGGVRDEAEIRGHRKTYLGSTPGKILGQLKKVKTSNPVMLLDEIDKMSSDFRGDPASALLEVLDPEQNSHFVDHYLEVEYDLSNVIFIATANSHDLPRALSDRMEKIYISGYVEEEKLQIAKNYLVPKQFKMHKIKKDEITISETAILDLIRYYTKESGVRALEREIGALTRKALKQILADKTVKHIAIDSSNLEEFLEAKKYNFGLAEKEDQIGSTTGLAYTEVGGELLTIEALAFPGKGEIKTTGKLGDVMKESAMAAYSCFRSRATNFGLKYDNYKDFDIHIHVPAGAIPKDGPSAGCALFTTIVSLMTKIPVHRTVAMTGEITLRGNVLPIGGLKEKLLAASRGGIKTVLIPEENVKDLKDIPPNIKESLEIISVSNIDQVLKHALVETPINK</sequence>
<gene>
    <name evidence="1" type="primary">lon</name>
    <name type="ordered locus">RF_0692</name>
</gene>
<keyword id="KW-0067">ATP-binding</keyword>
<keyword id="KW-0963">Cytoplasm</keyword>
<keyword id="KW-0378">Hydrolase</keyword>
<keyword id="KW-0547">Nucleotide-binding</keyword>
<keyword id="KW-0645">Protease</keyword>
<keyword id="KW-0720">Serine protease</keyword>
<keyword id="KW-0346">Stress response</keyword>
<name>LON_RICFE</name>
<evidence type="ECO:0000255" key="1">
    <source>
        <dbReference type="HAMAP-Rule" id="MF_01973"/>
    </source>
</evidence>
<evidence type="ECO:0000255" key="2">
    <source>
        <dbReference type="PROSITE-ProRule" id="PRU01122"/>
    </source>
</evidence>
<evidence type="ECO:0000255" key="3">
    <source>
        <dbReference type="PROSITE-ProRule" id="PRU01123"/>
    </source>
</evidence>
<organism>
    <name type="scientific">Rickettsia felis (strain ATCC VR-1525 / URRWXCal2)</name>
    <name type="common">Rickettsia azadi</name>
    <dbReference type="NCBI Taxonomy" id="315456"/>
    <lineage>
        <taxon>Bacteria</taxon>
        <taxon>Pseudomonadati</taxon>
        <taxon>Pseudomonadota</taxon>
        <taxon>Alphaproteobacteria</taxon>
        <taxon>Rickettsiales</taxon>
        <taxon>Rickettsiaceae</taxon>
        <taxon>Rickettsieae</taxon>
        <taxon>Rickettsia</taxon>
        <taxon>spotted fever group</taxon>
    </lineage>
</organism>
<feature type="chain" id="PRO_0000280893" description="Lon protease">
    <location>
        <begin position="1"/>
        <end position="778"/>
    </location>
</feature>
<feature type="domain" description="Lon N-terminal" evidence="3">
    <location>
        <begin position="6"/>
        <end position="207"/>
    </location>
</feature>
<feature type="domain" description="Lon proteolytic" evidence="2">
    <location>
        <begin position="592"/>
        <end position="773"/>
    </location>
</feature>
<feature type="active site" evidence="1">
    <location>
        <position position="679"/>
    </location>
</feature>
<feature type="active site" evidence="1">
    <location>
        <position position="722"/>
    </location>
</feature>
<feature type="binding site" evidence="1">
    <location>
        <begin position="356"/>
        <end position="363"/>
    </location>
    <ligand>
        <name>ATP</name>
        <dbReference type="ChEBI" id="CHEBI:30616"/>
    </ligand>
</feature>
<dbReference type="EC" id="3.4.21.53" evidence="1"/>
<dbReference type="EMBL" id="CP000053">
    <property type="protein sequence ID" value="AAY61543.1"/>
    <property type="molecule type" value="Genomic_DNA"/>
</dbReference>
<dbReference type="SMR" id="Q4ULN0"/>
<dbReference type="STRING" id="315456.RF_0692"/>
<dbReference type="MEROPS" id="S16.001"/>
<dbReference type="KEGG" id="rfe:RF_0692"/>
<dbReference type="eggNOG" id="COG0466">
    <property type="taxonomic scope" value="Bacteria"/>
</dbReference>
<dbReference type="HOGENOM" id="CLU_004109_4_3_5"/>
<dbReference type="OrthoDB" id="9803599at2"/>
<dbReference type="Proteomes" id="UP000008548">
    <property type="component" value="Chromosome"/>
</dbReference>
<dbReference type="GO" id="GO:0005737">
    <property type="term" value="C:cytoplasm"/>
    <property type="evidence" value="ECO:0007669"/>
    <property type="project" value="UniProtKB-SubCell"/>
</dbReference>
<dbReference type="GO" id="GO:0005524">
    <property type="term" value="F:ATP binding"/>
    <property type="evidence" value="ECO:0007669"/>
    <property type="project" value="UniProtKB-UniRule"/>
</dbReference>
<dbReference type="GO" id="GO:0016887">
    <property type="term" value="F:ATP hydrolysis activity"/>
    <property type="evidence" value="ECO:0007669"/>
    <property type="project" value="UniProtKB-UniRule"/>
</dbReference>
<dbReference type="GO" id="GO:0004176">
    <property type="term" value="F:ATP-dependent peptidase activity"/>
    <property type="evidence" value="ECO:0007669"/>
    <property type="project" value="UniProtKB-UniRule"/>
</dbReference>
<dbReference type="GO" id="GO:0043565">
    <property type="term" value="F:sequence-specific DNA binding"/>
    <property type="evidence" value="ECO:0007669"/>
    <property type="project" value="UniProtKB-UniRule"/>
</dbReference>
<dbReference type="GO" id="GO:0004252">
    <property type="term" value="F:serine-type endopeptidase activity"/>
    <property type="evidence" value="ECO:0007669"/>
    <property type="project" value="UniProtKB-UniRule"/>
</dbReference>
<dbReference type="GO" id="GO:0034605">
    <property type="term" value="P:cellular response to heat"/>
    <property type="evidence" value="ECO:0007669"/>
    <property type="project" value="UniProtKB-UniRule"/>
</dbReference>
<dbReference type="GO" id="GO:0006515">
    <property type="term" value="P:protein quality control for misfolded or incompletely synthesized proteins"/>
    <property type="evidence" value="ECO:0007669"/>
    <property type="project" value="UniProtKB-UniRule"/>
</dbReference>
<dbReference type="CDD" id="cd19500">
    <property type="entry name" value="RecA-like_Lon"/>
    <property type="match status" value="1"/>
</dbReference>
<dbReference type="FunFam" id="1.20.5.5270:FF:000002">
    <property type="entry name" value="Lon protease homolog"/>
    <property type="match status" value="1"/>
</dbReference>
<dbReference type="FunFam" id="3.40.50.300:FF:000021">
    <property type="entry name" value="Lon protease homolog"/>
    <property type="match status" value="1"/>
</dbReference>
<dbReference type="Gene3D" id="1.10.8.60">
    <property type="match status" value="1"/>
</dbReference>
<dbReference type="Gene3D" id="1.20.5.5270">
    <property type="match status" value="1"/>
</dbReference>
<dbReference type="Gene3D" id="1.20.58.1480">
    <property type="match status" value="1"/>
</dbReference>
<dbReference type="Gene3D" id="3.30.230.10">
    <property type="match status" value="1"/>
</dbReference>
<dbReference type="Gene3D" id="2.30.130.40">
    <property type="entry name" value="LON domain-like"/>
    <property type="match status" value="1"/>
</dbReference>
<dbReference type="Gene3D" id="3.40.50.300">
    <property type="entry name" value="P-loop containing nucleotide triphosphate hydrolases"/>
    <property type="match status" value="1"/>
</dbReference>
<dbReference type="HAMAP" id="MF_01973">
    <property type="entry name" value="lon_bact"/>
    <property type="match status" value="1"/>
</dbReference>
<dbReference type="InterPro" id="IPR003593">
    <property type="entry name" value="AAA+_ATPase"/>
</dbReference>
<dbReference type="InterPro" id="IPR003959">
    <property type="entry name" value="ATPase_AAA_core"/>
</dbReference>
<dbReference type="InterPro" id="IPR027543">
    <property type="entry name" value="Lon_bac"/>
</dbReference>
<dbReference type="InterPro" id="IPR004815">
    <property type="entry name" value="Lon_bac/euk-typ"/>
</dbReference>
<dbReference type="InterPro" id="IPR054594">
    <property type="entry name" value="Lon_lid"/>
</dbReference>
<dbReference type="InterPro" id="IPR008269">
    <property type="entry name" value="Lon_proteolytic"/>
</dbReference>
<dbReference type="InterPro" id="IPR027065">
    <property type="entry name" value="Lon_Prtase"/>
</dbReference>
<dbReference type="InterPro" id="IPR003111">
    <property type="entry name" value="Lon_prtase_N"/>
</dbReference>
<dbReference type="InterPro" id="IPR046336">
    <property type="entry name" value="Lon_prtase_N_sf"/>
</dbReference>
<dbReference type="InterPro" id="IPR027417">
    <property type="entry name" value="P-loop_NTPase"/>
</dbReference>
<dbReference type="InterPro" id="IPR008268">
    <property type="entry name" value="Peptidase_S16_AS"/>
</dbReference>
<dbReference type="InterPro" id="IPR015947">
    <property type="entry name" value="PUA-like_sf"/>
</dbReference>
<dbReference type="InterPro" id="IPR020568">
    <property type="entry name" value="Ribosomal_Su5_D2-typ_SF"/>
</dbReference>
<dbReference type="InterPro" id="IPR014721">
    <property type="entry name" value="Ribsml_uS5_D2-typ_fold_subgr"/>
</dbReference>
<dbReference type="NCBIfam" id="TIGR00763">
    <property type="entry name" value="lon"/>
    <property type="match status" value="1"/>
</dbReference>
<dbReference type="NCBIfam" id="NF008053">
    <property type="entry name" value="PRK10787.1"/>
    <property type="match status" value="1"/>
</dbReference>
<dbReference type="PANTHER" id="PTHR10046">
    <property type="entry name" value="ATP DEPENDENT LON PROTEASE FAMILY MEMBER"/>
    <property type="match status" value="1"/>
</dbReference>
<dbReference type="Pfam" id="PF00004">
    <property type="entry name" value="AAA"/>
    <property type="match status" value="1"/>
</dbReference>
<dbReference type="Pfam" id="PF05362">
    <property type="entry name" value="Lon_C"/>
    <property type="match status" value="1"/>
</dbReference>
<dbReference type="Pfam" id="PF22667">
    <property type="entry name" value="Lon_lid"/>
    <property type="match status" value="1"/>
</dbReference>
<dbReference type="Pfam" id="PF02190">
    <property type="entry name" value="LON_substr_bdg"/>
    <property type="match status" value="1"/>
</dbReference>
<dbReference type="PIRSF" id="PIRSF001174">
    <property type="entry name" value="Lon_proteas"/>
    <property type="match status" value="1"/>
</dbReference>
<dbReference type="PRINTS" id="PR00830">
    <property type="entry name" value="ENDOLAPTASE"/>
</dbReference>
<dbReference type="SMART" id="SM00382">
    <property type="entry name" value="AAA"/>
    <property type="match status" value="1"/>
</dbReference>
<dbReference type="SMART" id="SM00464">
    <property type="entry name" value="LON"/>
    <property type="match status" value="1"/>
</dbReference>
<dbReference type="SUPFAM" id="SSF52540">
    <property type="entry name" value="P-loop containing nucleoside triphosphate hydrolases"/>
    <property type="match status" value="1"/>
</dbReference>
<dbReference type="SUPFAM" id="SSF88697">
    <property type="entry name" value="PUA domain-like"/>
    <property type="match status" value="1"/>
</dbReference>
<dbReference type="SUPFAM" id="SSF54211">
    <property type="entry name" value="Ribosomal protein S5 domain 2-like"/>
    <property type="match status" value="1"/>
</dbReference>
<dbReference type="PROSITE" id="PS51787">
    <property type="entry name" value="LON_N"/>
    <property type="match status" value="1"/>
</dbReference>
<dbReference type="PROSITE" id="PS51786">
    <property type="entry name" value="LON_PROTEOLYTIC"/>
    <property type="match status" value="1"/>
</dbReference>
<dbReference type="PROSITE" id="PS01046">
    <property type="entry name" value="LON_SER"/>
    <property type="match status" value="1"/>
</dbReference>
<proteinExistence type="inferred from homology"/>
<reference key="1">
    <citation type="journal article" date="2005" name="PLoS Biol.">
        <title>The genome sequence of Rickettsia felis identifies the first putative conjugative plasmid in an obligate intracellular parasite.</title>
        <authorList>
            <person name="Ogata H."/>
            <person name="Renesto P."/>
            <person name="Audic S."/>
            <person name="Robert C."/>
            <person name="Blanc G."/>
            <person name="Fournier P.-E."/>
            <person name="Parinello H."/>
            <person name="Claverie J.-M."/>
            <person name="Raoult D."/>
        </authorList>
    </citation>
    <scope>NUCLEOTIDE SEQUENCE [LARGE SCALE GENOMIC DNA]</scope>
    <source>
        <strain>ATCC VR-1525 / URRWXCal2</strain>
    </source>
</reference>
<accession>Q4ULN0</accession>
<protein>
    <recommendedName>
        <fullName evidence="1">Lon protease</fullName>
        <ecNumber evidence="1">3.4.21.53</ecNumber>
    </recommendedName>
    <alternativeName>
        <fullName evidence="1">ATP-dependent protease La</fullName>
    </alternativeName>
</protein>
<comment type="function">
    <text evidence="1">ATP-dependent serine protease that mediates the selective degradation of mutant and abnormal proteins as well as certain short-lived regulatory proteins. Required for cellular homeostasis and for survival from DNA damage and developmental changes induced by stress. Degrades polypeptides processively to yield small peptide fragments that are 5 to 10 amino acids long. Binds to DNA in a double-stranded, site-specific manner.</text>
</comment>
<comment type="catalytic activity">
    <reaction evidence="1">
        <text>Hydrolysis of proteins in presence of ATP.</text>
        <dbReference type="EC" id="3.4.21.53"/>
    </reaction>
</comment>
<comment type="subunit">
    <text evidence="1">Homohexamer. Organized in a ring with a central cavity.</text>
</comment>
<comment type="subcellular location">
    <subcellularLocation>
        <location evidence="1">Cytoplasm</location>
    </subcellularLocation>
</comment>
<comment type="induction">
    <text evidence="1">By heat shock.</text>
</comment>
<comment type="similarity">
    <text evidence="1">Belongs to the peptidase S16 family.</text>
</comment>